<feature type="chain" id="PRO_1000199930" description="Sulfur carrier protein TusA">
    <location>
        <begin position="1"/>
        <end position="81"/>
    </location>
</feature>
<feature type="active site" description="Cysteine persulfide intermediate" evidence="1">
    <location>
        <position position="19"/>
    </location>
</feature>
<dbReference type="EMBL" id="FM200053">
    <property type="protein sequence ID" value="CAR61457.1"/>
    <property type="molecule type" value="Genomic_DNA"/>
</dbReference>
<dbReference type="RefSeq" id="WP_001541054.1">
    <property type="nucleotide sequence ID" value="NC_011147.1"/>
</dbReference>
<dbReference type="SMR" id="B5BHL9"/>
<dbReference type="GeneID" id="66757902"/>
<dbReference type="KEGG" id="sek:SSPA3200"/>
<dbReference type="HOGENOM" id="CLU_165255_5_0_6"/>
<dbReference type="Proteomes" id="UP000001869">
    <property type="component" value="Chromosome"/>
</dbReference>
<dbReference type="GO" id="GO:0005737">
    <property type="term" value="C:cytoplasm"/>
    <property type="evidence" value="ECO:0007669"/>
    <property type="project" value="UniProtKB-SubCell"/>
</dbReference>
<dbReference type="GO" id="GO:0097163">
    <property type="term" value="F:sulfur carrier activity"/>
    <property type="evidence" value="ECO:0007669"/>
    <property type="project" value="UniProtKB-UniRule"/>
</dbReference>
<dbReference type="GO" id="GO:0002143">
    <property type="term" value="P:tRNA wobble position uridine thiolation"/>
    <property type="evidence" value="ECO:0007669"/>
    <property type="project" value="InterPro"/>
</dbReference>
<dbReference type="CDD" id="cd03423">
    <property type="entry name" value="SirA"/>
    <property type="match status" value="1"/>
</dbReference>
<dbReference type="Gene3D" id="3.30.110.40">
    <property type="entry name" value="TusA-like domain"/>
    <property type="match status" value="1"/>
</dbReference>
<dbReference type="HAMAP" id="MF_00413">
    <property type="entry name" value="Thiourid_synth_A"/>
    <property type="match status" value="1"/>
</dbReference>
<dbReference type="InterPro" id="IPR022931">
    <property type="entry name" value="Sulphur_carrier_TusA"/>
</dbReference>
<dbReference type="InterPro" id="IPR001455">
    <property type="entry name" value="TusA-like"/>
</dbReference>
<dbReference type="InterPro" id="IPR036868">
    <property type="entry name" value="TusA-like_sf"/>
</dbReference>
<dbReference type="NCBIfam" id="NF001423">
    <property type="entry name" value="PRK00299.1"/>
    <property type="match status" value="1"/>
</dbReference>
<dbReference type="PANTHER" id="PTHR33279:SF2">
    <property type="entry name" value="SULFUR CARRIER PROTEIN TUSA"/>
    <property type="match status" value="1"/>
</dbReference>
<dbReference type="PANTHER" id="PTHR33279">
    <property type="entry name" value="SULFUR CARRIER PROTEIN YEDF-RELATED"/>
    <property type="match status" value="1"/>
</dbReference>
<dbReference type="Pfam" id="PF01206">
    <property type="entry name" value="TusA"/>
    <property type="match status" value="1"/>
</dbReference>
<dbReference type="SUPFAM" id="SSF64307">
    <property type="entry name" value="SirA-like"/>
    <property type="match status" value="1"/>
</dbReference>
<dbReference type="PROSITE" id="PS01148">
    <property type="entry name" value="UPF0033"/>
    <property type="match status" value="1"/>
</dbReference>
<sequence>MSDLFSSPDHTLDALGLRCPEPVMMVRKTVRNMQTGETLLIIADDPATTRDIPGFCTFMEHDLLAQETEGLPYRYLLRKAH</sequence>
<protein>
    <recommendedName>
        <fullName evidence="1">Sulfur carrier protein TusA</fullName>
    </recommendedName>
    <alternativeName>
        <fullName evidence="1">Sulfur mediator TusA</fullName>
    </alternativeName>
    <alternativeName>
        <fullName evidence="1">Sulfur transfer protein TusA</fullName>
    </alternativeName>
    <alternativeName>
        <fullName evidence="1">tRNA 2-thiouridine synthesizing protein A</fullName>
    </alternativeName>
</protein>
<evidence type="ECO:0000255" key="1">
    <source>
        <dbReference type="HAMAP-Rule" id="MF_00413"/>
    </source>
</evidence>
<name>TUSA_SALPK</name>
<proteinExistence type="inferred from homology"/>
<reference key="1">
    <citation type="journal article" date="2009" name="BMC Genomics">
        <title>Pseudogene accumulation in the evolutionary histories of Salmonella enterica serovars Paratyphi A and Typhi.</title>
        <authorList>
            <person name="Holt K.E."/>
            <person name="Thomson N.R."/>
            <person name="Wain J."/>
            <person name="Langridge G.C."/>
            <person name="Hasan R."/>
            <person name="Bhutta Z.A."/>
            <person name="Quail M.A."/>
            <person name="Norbertczak H."/>
            <person name="Walker D."/>
            <person name="Simmonds M."/>
            <person name="White B."/>
            <person name="Bason N."/>
            <person name="Mungall K."/>
            <person name="Dougan G."/>
            <person name="Parkhill J."/>
        </authorList>
    </citation>
    <scope>NUCLEOTIDE SEQUENCE [LARGE SCALE GENOMIC DNA]</scope>
    <source>
        <strain>AKU_12601</strain>
    </source>
</reference>
<accession>B5BHL9</accession>
<keyword id="KW-0963">Cytoplasm</keyword>
<keyword id="KW-0819">tRNA processing</keyword>
<comment type="function">
    <text evidence="1">Sulfur carrier protein involved in sulfur trafficking in the cell. Part of a sulfur-relay system required for 2-thiolation during synthesis of 2-thiouridine of the modified wobble base 5-methylaminomethyl-2-thiouridine (mnm(5)s(2)U) in tRNA. Interacts with IscS and stimulates its cysteine desulfurase activity. Accepts an activated sulfur from IscS, which is then transferred to TusD, and thus determines the direction of sulfur flow from IscS to 2-thiouridine formation. Also appears to be involved in sulfur transfer for the biosynthesis of molybdopterin.</text>
</comment>
<comment type="pathway">
    <text evidence="1">tRNA modification.</text>
</comment>
<comment type="subunit">
    <text evidence="1">Interacts with IscS.</text>
</comment>
<comment type="subcellular location">
    <subcellularLocation>
        <location evidence="1">Cytoplasm</location>
    </subcellularLocation>
</comment>
<comment type="similarity">
    <text evidence="1">Belongs to the sulfur carrier protein TusA family.</text>
</comment>
<organism>
    <name type="scientific">Salmonella paratyphi A (strain AKU_12601)</name>
    <dbReference type="NCBI Taxonomy" id="554290"/>
    <lineage>
        <taxon>Bacteria</taxon>
        <taxon>Pseudomonadati</taxon>
        <taxon>Pseudomonadota</taxon>
        <taxon>Gammaproteobacteria</taxon>
        <taxon>Enterobacterales</taxon>
        <taxon>Enterobacteriaceae</taxon>
        <taxon>Salmonella</taxon>
    </lineage>
</organism>
<gene>
    <name evidence="1" type="primary">tusA</name>
    <name type="ordered locus">SSPA3200</name>
</gene>